<accession>C5C046</accession>
<proteinExistence type="inferred from homology"/>
<evidence type="ECO:0000255" key="1">
    <source>
        <dbReference type="HAMAP-Rule" id="MF_00098"/>
    </source>
</evidence>
<reference key="1">
    <citation type="journal article" date="2009" name="Stand. Genomic Sci.">
        <title>Complete genome sequence of Beutenbergia cavernae type strain (HKI 0122).</title>
        <authorList>
            <person name="Land M."/>
            <person name="Pukall R."/>
            <person name="Abt B."/>
            <person name="Goker M."/>
            <person name="Rohde M."/>
            <person name="Glavina Del Rio T."/>
            <person name="Tice H."/>
            <person name="Copeland A."/>
            <person name="Cheng J.F."/>
            <person name="Lucas S."/>
            <person name="Chen F."/>
            <person name="Nolan M."/>
            <person name="Bruce D."/>
            <person name="Goodwin L."/>
            <person name="Pitluck S."/>
            <person name="Ivanova N."/>
            <person name="Mavromatis K."/>
            <person name="Ovchinnikova G."/>
            <person name="Pati A."/>
            <person name="Chen A."/>
            <person name="Palaniappan K."/>
            <person name="Hauser L."/>
            <person name="Chang Y.J."/>
            <person name="Jefferies C.C."/>
            <person name="Saunders E."/>
            <person name="Brettin T."/>
            <person name="Detter J.C."/>
            <person name="Han C."/>
            <person name="Chain P."/>
            <person name="Bristow J."/>
            <person name="Eisen J.A."/>
            <person name="Markowitz V."/>
            <person name="Hugenholtz P."/>
            <person name="Kyrpides N.C."/>
            <person name="Klenk H.P."/>
            <person name="Lapidus A."/>
        </authorList>
    </citation>
    <scope>NUCLEOTIDE SEQUENCE [LARGE SCALE GENOMIC DNA]</scope>
    <source>
        <strain>ATCC BAA-8 / DSM 12333 / CCUG 43141 / JCM 11478 / NBRC 16432 / NCIMB 13614 / HKI 0122</strain>
    </source>
</reference>
<organism>
    <name type="scientific">Beutenbergia cavernae (strain ATCC BAA-8 / DSM 12333 / CCUG 43141 / JCM 11478 / NBRC 16432 / NCIMB 13614 / HKI 0122)</name>
    <dbReference type="NCBI Taxonomy" id="471853"/>
    <lineage>
        <taxon>Bacteria</taxon>
        <taxon>Bacillati</taxon>
        <taxon>Actinomycetota</taxon>
        <taxon>Actinomycetes</taxon>
        <taxon>Micrococcales</taxon>
        <taxon>Beutenbergiaceae</taxon>
        <taxon>Beutenbergia</taxon>
    </lineage>
</organism>
<protein>
    <recommendedName>
        <fullName evidence="1">Methionine--tRNA ligase</fullName>
        <ecNumber evidence="1">6.1.1.10</ecNumber>
    </recommendedName>
    <alternativeName>
        <fullName evidence="1">Methionyl-tRNA synthetase</fullName>
        <shortName evidence="1">MetRS</shortName>
    </alternativeName>
</protein>
<feature type="chain" id="PRO_1000202754" description="Methionine--tRNA ligase">
    <location>
        <begin position="1"/>
        <end position="614"/>
    </location>
</feature>
<feature type="short sequence motif" description="'HIGH' region">
    <location>
        <begin position="11"/>
        <end position="21"/>
    </location>
</feature>
<feature type="short sequence motif" description="'KMSKS' region">
    <location>
        <begin position="359"/>
        <end position="363"/>
    </location>
</feature>
<feature type="binding site" evidence="1">
    <location>
        <position position="143"/>
    </location>
    <ligand>
        <name>Zn(2+)</name>
        <dbReference type="ChEBI" id="CHEBI:29105"/>
    </ligand>
</feature>
<feature type="binding site" evidence="1">
    <location>
        <position position="146"/>
    </location>
    <ligand>
        <name>Zn(2+)</name>
        <dbReference type="ChEBI" id="CHEBI:29105"/>
    </ligand>
</feature>
<feature type="binding site" evidence="1">
    <location>
        <position position="156"/>
    </location>
    <ligand>
        <name>Zn(2+)</name>
        <dbReference type="ChEBI" id="CHEBI:29105"/>
    </ligand>
</feature>
<feature type="binding site" evidence="1">
    <location>
        <position position="159"/>
    </location>
    <ligand>
        <name>Zn(2+)</name>
        <dbReference type="ChEBI" id="CHEBI:29105"/>
    </ligand>
</feature>
<feature type="binding site" evidence="1">
    <location>
        <position position="362"/>
    </location>
    <ligand>
        <name>ATP</name>
        <dbReference type="ChEBI" id="CHEBI:30616"/>
    </ligand>
</feature>
<sequence length="614" mass="67928">MSHILSAVAWPYTNGPRHIGHVAGFGVPSDVFSRYMRMAGHDVLMVSGTDEHGTPILVLAEQEGVTPQELTDRYNRVIVDDLANLGLSYDLFTRTTTRNHYAVVQEMFRTVHKNGYMVEQTTMGAISPSTGRTLPDRYIEGTCPICGYDGARGDQCDNCGNQLDAVDLINPRSRINGEKPTFIETQHFFLDLPALADALGAWLRTRTHWRPNVLNFSLNLLDDLRPRAMTRDIDWGIPVPLPGWEDNPAKRLYVWFDAVIGYLSASIEWARRQELAAGGAGTPDAEAWRAWWNPTPGLDQQSYYFMGKDNITFHSQIWPAELLGYAGKGSRGGEPGIYGELNLPTEVVSSEFLTTEGKQFSTSRGVVVYVRDMLARYQPDALRYFIAVAGPESSDSDFTWSEFKRRTNDELVAGWGNLVNRTATMVHKNFGAVPEPGERLAVDEAVLATTRAGFAQVGRLLETQRQRAAVTEAMRVVGEVNKYVSETEPWKLKTDRDRLATVLHTATQAVADCNVLLAPFLPHAAQEIHSALGGTGTLAPQPRVDEVTDLDDASRSYPIITGDYVRGETLAPWESAAVVAGTPIEKPSPVFTKLDDAIVEEELERMRAGAAERA</sequence>
<name>SYM_BEUC1</name>
<keyword id="KW-0030">Aminoacyl-tRNA synthetase</keyword>
<keyword id="KW-0067">ATP-binding</keyword>
<keyword id="KW-0963">Cytoplasm</keyword>
<keyword id="KW-0436">Ligase</keyword>
<keyword id="KW-0479">Metal-binding</keyword>
<keyword id="KW-0547">Nucleotide-binding</keyword>
<keyword id="KW-0648">Protein biosynthesis</keyword>
<keyword id="KW-1185">Reference proteome</keyword>
<keyword id="KW-0862">Zinc</keyword>
<comment type="function">
    <text evidence="1">Is required not only for elongation of protein synthesis but also for the initiation of all mRNA translation through initiator tRNA(fMet) aminoacylation.</text>
</comment>
<comment type="catalytic activity">
    <reaction evidence="1">
        <text>tRNA(Met) + L-methionine + ATP = L-methionyl-tRNA(Met) + AMP + diphosphate</text>
        <dbReference type="Rhea" id="RHEA:13481"/>
        <dbReference type="Rhea" id="RHEA-COMP:9667"/>
        <dbReference type="Rhea" id="RHEA-COMP:9698"/>
        <dbReference type="ChEBI" id="CHEBI:30616"/>
        <dbReference type="ChEBI" id="CHEBI:33019"/>
        <dbReference type="ChEBI" id="CHEBI:57844"/>
        <dbReference type="ChEBI" id="CHEBI:78442"/>
        <dbReference type="ChEBI" id="CHEBI:78530"/>
        <dbReference type="ChEBI" id="CHEBI:456215"/>
        <dbReference type="EC" id="6.1.1.10"/>
    </reaction>
</comment>
<comment type="cofactor">
    <cofactor evidence="1">
        <name>Zn(2+)</name>
        <dbReference type="ChEBI" id="CHEBI:29105"/>
    </cofactor>
    <text evidence="1">Binds 1 zinc ion per subunit.</text>
</comment>
<comment type="subunit">
    <text evidence="1">Monomer.</text>
</comment>
<comment type="subcellular location">
    <subcellularLocation>
        <location evidence="1">Cytoplasm</location>
    </subcellularLocation>
</comment>
<comment type="similarity">
    <text evidence="1">Belongs to the class-I aminoacyl-tRNA synthetase family. MetG type 1 subfamily.</text>
</comment>
<gene>
    <name evidence="1" type="primary">metG</name>
    <name type="ordered locus">Bcav_0971</name>
</gene>
<dbReference type="EC" id="6.1.1.10" evidence="1"/>
<dbReference type="EMBL" id="CP001618">
    <property type="protein sequence ID" value="ACQ79232.1"/>
    <property type="molecule type" value="Genomic_DNA"/>
</dbReference>
<dbReference type="RefSeq" id="WP_012726012.1">
    <property type="nucleotide sequence ID" value="NC_012669.1"/>
</dbReference>
<dbReference type="SMR" id="C5C046"/>
<dbReference type="STRING" id="471853.Bcav_0971"/>
<dbReference type="KEGG" id="bcv:Bcav_0971"/>
<dbReference type="eggNOG" id="COG0143">
    <property type="taxonomic scope" value="Bacteria"/>
</dbReference>
<dbReference type="HOGENOM" id="CLU_009710_1_2_11"/>
<dbReference type="OrthoDB" id="9810191at2"/>
<dbReference type="Proteomes" id="UP000007962">
    <property type="component" value="Chromosome"/>
</dbReference>
<dbReference type="GO" id="GO:0005829">
    <property type="term" value="C:cytosol"/>
    <property type="evidence" value="ECO:0007669"/>
    <property type="project" value="TreeGrafter"/>
</dbReference>
<dbReference type="GO" id="GO:0005524">
    <property type="term" value="F:ATP binding"/>
    <property type="evidence" value="ECO:0007669"/>
    <property type="project" value="UniProtKB-UniRule"/>
</dbReference>
<dbReference type="GO" id="GO:0046872">
    <property type="term" value="F:metal ion binding"/>
    <property type="evidence" value="ECO:0007669"/>
    <property type="project" value="UniProtKB-KW"/>
</dbReference>
<dbReference type="GO" id="GO:0004825">
    <property type="term" value="F:methionine-tRNA ligase activity"/>
    <property type="evidence" value="ECO:0007669"/>
    <property type="project" value="UniProtKB-UniRule"/>
</dbReference>
<dbReference type="GO" id="GO:0006431">
    <property type="term" value="P:methionyl-tRNA aminoacylation"/>
    <property type="evidence" value="ECO:0007669"/>
    <property type="project" value="UniProtKB-UniRule"/>
</dbReference>
<dbReference type="CDD" id="cd07957">
    <property type="entry name" value="Anticodon_Ia_Met"/>
    <property type="match status" value="1"/>
</dbReference>
<dbReference type="CDD" id="cd00814">
    <property type="entry name" value="MetRS_core"/>
    <property type="match status" value="1"/>
</dbReference>
<dbReference type="FunFam" id="2.20.28.20:FF:000001">
    <property type="entry name" value="Methionine--tRNA ligase"/>
    <property type="match status" value="1"/>
</dbReference>
<dbReference type="Gene3D" id="3.40.50.620">
    <property type="entry name" value="HUPs"/>
    <property type="match status" value="1"/>
</dbReference>
<dbReference type="Gene3D" id="1.10.730.10">
    <property type="entry name" value="Isoleucyl-tRNA Synthetase, Domain 1"/>
    <property type="match status" value="1"/>
</dbReference>
<dbReference type="Gene3D" id="2.20.28.20">
    <property type="entry name" value="Methionyl-tRNA synthetase, Zn-domain"/>
    <property type="match status" value="1"/>
</dbReference>
<dbReference type="HAMAP" id="MF_00098">
    <property type="entry name" value="Met_tRNA_synth_type1"/>
    <property type="match status" value="1"/>
</dbReference>
<dbReference type="InterPro" id="IPR041872">
    <property type="entry name" value="Anticodon_Met"/>
</dbReference>
<dbReference type="InterPro" id="IPR023458">
    <property type="entry name" value="Met-tRNA_ligase_1"/>
</dbReference>
<dbReference type="InterPro" id="IPR014758">
    <property type="entry name" value="Met-tRNA_synth"/>
</dbReference>
<dbReference type="InterPro" id="IPR015413">
    <property type="entry name" value="Methionyl/Leucyl_tRNA_Synth"/>
</dbReference>
<dbReference type="InterPro" id="IPR033911">
    <property type="entry name" value="MetRS_core"/>
</dbReference>
<dbReference type="InterPro" id="IPR029038">
    <property type="entry name" value="MetRS_Zn"/>
</dbReference>
<dbReference type="InterPro" id="IPR014729">
    <property type="entry name" value="Rossmann-like_a/b/a_fold"/>
</dbReference>
<dbReference type="InterPro" id="IPR009080">
    <property type="entry name" value="tRNAsynth_Ia_anticodon-bd"/>
</dbReference>
<dbReference type="NCBIfam" id="TIGR00398">
    <property type="entry name" value="metG"/>
    <property type="match status" value="1"/>
</dbReference>
<dbReference type="PANTHER" id="PTHR45765">
    <property type="entry name" value="METHIONINE--TRNA LIGASE"/>
    <property type="match status" value="1"/>
</dbReference>
<dbReference type="PANTHER" id="PTHR45765:SF1">
    <property type="entry name" value="METHIONINE--TRNA LIGASE, CYTOPLASMIC"/>
    <property type="match status" value="1"/>
</dbReference>
<dbReference type="Pfam" id="PF19303">
    <property type="entry name" value="Anticodon_3"/>
    <property type="match status" value="1"/>
</dbReference>
<dbReference type="Pfam" id="PF09334">
    <property type="entry name" value="tRNA-synt_1g"/>
    <property type="match status" value="1"/>
</dbReference>
<dbReference type="PRINTS" id="PR01041">
    <property type="entry name" value="TRNASYNTHMET"/>
</dbReference>
<dbReference type="SUPFAM" id="SSF47323">
    <property type="entry name" value="Anticodon-binding domain of a subclass of class I aminoacyl-tRNA synthetases"/>
    <property type="match status" value="1"/>
</dbReference>
<dbReference type="SUPFAM" id="SSF57770">
    <property type="entry name" value="Methionyl-tRNA synthetase (MetRS), Zn-domain"/>
    <property type="match status" value="1"/>
</dbReference>
<dbReference type="SUPFAM" id="SSF52374">
    <property type="entry name" value="Nucleotidylyl transferase"/>
    <property type="match status" value="1"/>
</dbReference>